<sequence length="107" mass="11701">MSYVLIVFASLLSCGGQLCQKQAAHTRARQRVWGWLALSLVLLGCAMLLWLFVLQTVPVSVAYPMLSLNFIFITLAARFIWHEPIALRHGVGVLLIIVGIILLGGAA</sequence>
<organism>
    <name type="scientific">Enterobacter sp. (strain 638)</name>
    <dbReference type="NCBI Taxonomy" id="399742"/>
    <lineage>
        <taxon>Bacteria</taxon>
        <taxon>Pseudomonadati</taxon>
        <taxon>Pseudomonadota</taxon>
        <taxon>Gammaproteobacteria</taxon>
        <taxon>Enterobacterales</taxon>
        <taxon>Enterobacteriaceae</taxon>
        <taxon>Enterobacter</taxon>
    </lineage>
</organism>
<dbReference type="EMBL" id="CP000653">
    <property type="protein sequence ID" value="ABP60750.1"/>
    <property type="molecule type" value="Genomic_DNA"/>
</dbReference>
<dbReference type="RefSeq" id="WP_012017465.1">
    <property type="nucleotide sequence ID" value="NC_009436.1"/>
</dbReference>
<dbReference type="SMR" id="A4WAM0"/>
<dbReference type="STRING" id="399742.Ent638_2074"/>
<dbReference type="KEGG" id="ent:Ent638_2074"/>
<dbReference type="eggNOG" id="COG2076">
    <property type="taxonomic scope" value="Bacteria"/>
</dbReference>
<dbReference type="HOGENOM" id="CLU_131462_5_1_6"/>
<dbReference type="OrthoDB" id="6058674at2"/>
<dbReference type="UniPathway" id="UPA00030"/>
<dbReference type="Proteomes" id="UP000000230">
    <property type="component" value="Chromosome"/>
</dbReference>
<dbReference type="GO" id="GO:0005886">
    <property type="term" value="C:plasma membrane"/>
    <property type="evidence" value="ECO:0007669"/>
    <property type="project" value="UniProtKB-SubCell"/>
</dbReference>
<dbReference type="GO" id="GO:1901505">
    <property type="term" value="F:carbohydrate derivative transmembrane transporter activity"/>
    <property type="evidence" value="ECO:0007669"/>
    <property type="project" value="InterPro"/>
</dbReference>
<dbReference type="GO" id="GO:0009245">
    <property type="term" value="P:lipid A biosynthetic process"/>
    <property type="evidence" value="ECO:0007669"/>
    <property type="project" value="UniProtKB-UniRule"/>
</dbReference>
<dbReference type="GO" id="GO:0009103">
    <property type="term" value="P:lipopolysaccharide biosynthetic process"/>
    <property type="evidence" value="ECO:0007669"/>
    <property type="project" value="UniProtKB-UniRule"/>
</dbReference>
<dbReference type="FunFam" id="1.10.3730.20:FF:000002">
    <property type="entry name" value="Probable 4-amino-4-deoxy-L-arabinose-phosphoundecaprenol flippase subunit ArnE"/>
    <property type="match status" value="1"/>
</dbReference>
<dbReference type="Gene3D" id="1.10.3730.20">
    <property type="match status" value="1"/>
</dbReference>
<dbReference type="HAMAP" id="MF_01869">
    <property type="entry name" value="Flippase_ArnE"/>
    <property type="match status" value="1"/>
</dbReference>
<dbReference type="InterPro" id="IPR000620">
    <property type="entry name" value="EamA_dom"/>
</dbReference>
<dbReference type="InterPro" id="IPR022883">
    <property type="entry name" value="Flippase_ArnE"/>
</dbReference>
<dbReference type="InterPro" id="IPR000390">
    <property type="entry name" value="Small_drug/metabolite_transptr"/>
</dbReference>
<dbReference type="NCBIfam" id="NF011625">
    <property type="entry name" value="PRK15051.1"/>
    <property type="match status" value="1"/>
</dbReference>
<dbReference type="PANTHER" id="PTHR30561:SF23">
    <property type="entry name" value="4-AMINO-4-DEOXY-L-ARABINOSE-PHOSPHOUNDECAPRENOL FLIPPASE SUBUNIT ARNE-RELATED"/>
    <property type="match status" value="1"/>
</dbReference>
<dbReference type="PANTHER" id="PTHR30561">
    <property type="entry name" value="SMR FAMILY PROTON-DEPENDENT DRUG EFFLUX TRANSPORTER SUGE"/>
    <property type="match status" value="1"/>
</dbReference>
<dbReference type="Pfam" id="PF00892">
    <property type="entry name" value="EamA"/>
    <property type="match status" value="1"/>
</dbReference>
<dbReference type="SUPFAM" id="SSF103481">
    <property type="entry name" value="Multidrug resistance efflux transporter EmrE"/>
    <property type="match status" value="1"/>
</dbReference>
<keyword id="KW-0997">Cell inner membrane</keyword>
<keyword id="KW-1003">Cell membrane</keyword>
<keyword id="KW-0441">Lipid A biosynthesis</keyword>
<keyword id="KW-0444">Lipid biosynthesis</keyword>
<keyword id="KW-0443">Lipid metabolism</keyword>
<keyword id="KW-0448">Lipopolysaccharide biosynthesis</keyword>
<keyword id="KW-0472">Membrane</keyword>
<keyword id="KW-0812">Transmembrane</keyword>
<keyword id="KW-1133">Transmembrane helix</keyword>
<keyword id="KW-0813">Transport</keyword>
<comment type="function">
    <text evidence="1">Translocates 4-amino-4-deoxy-L-arabinose-phosphoundecaprenol (alpha-L-Ara4N-phosphoundecaprenol) from the cytoplasmic to the periplasmic side of the inner membrane.</text>
</comment>
<comment type="pathway">
    <text evidence="1">Bacterial outer membrane biogenesis; lipopolysaccharide biosynthesis.</text>
</comment>
<comment type="subunit">
    <text evidence="1">Heterodimer of ArnE and ArnF.</text>
</comment>
<comment type="subcellular location">
    <subcellularLocation>
        <location evidence="1">Cell inner membrane</location>
        <topology evidence="1">Multi-pass membrane protein</topology>
    </subcellularLocation>
</comment>
<comment type="similarity">
    <text evidence="1">Belongs to the ArnE family.</text>
</comment>
<accession>A4WAM0</accession>
<proteinExistence type="inferred from homology"/>
<reference key="1">
    <citation type="journal article" date="2010" name="PLoS Genet.">
        <title>Genome sequence of the plant growth promoting endophytic bacterium Enterobacter sp. 638.</title>
        <authorList>
            <person name="Taghavi S."/>
            <person name="van der Lelie D."/>
            <person name="Hoffman A."/>
            <person name="Zhang Y.B."/>
            <person name="Walla M.D."/>
            <person name="Vangronsveld J."/>
            <person name="Newman L."/>
            <person name="Monchy S."/>
        </authorList>
    </citation>
    <scope>NUCLEOTIDE SEQUENCE [LARGE SCALE GENOMIC DNA]</scope>
    <source>
        <strain>638</strain>
    </source>
</reference>
<protein>
    <recommendedName>
        <fullName evidence="1">Probable 4-amino-4-deoxy-L-arabinose-phosphoundecaprenol flippase subunit ArnE</fullName>
        <shortName evidence="1">L-Ara4N-phosphoundecaprenol flippase subunit ArnE</shortName>
    </recommendedName>
    <alternativeName>
        <fullName evidence="1">Undecaprenyl phosphate-aminoarabinose flippase subunit ArnE</fullName>
    </alternativeName>
</protein>
<evidence type="ECO:0000255" key="1">
    <source>
        <dbReference type="HAMAP-Rule" id="MF_01869"/>
    </source>
</evidence>
<feature type="chain" id="PRO_0000382953" description="Probable 4-amino-4-deoxy-L-arabinose-phosphoundecaprenol flippase subunit ArnE">
    <location>
        <begin position="1"/>
        <end position="107"/>
    </location>
</feature>
<feature type="transmembrane region" description="Helical" evidence="1">
    <location>
        <begin position="34"/>
        <end position="54"/>
    </location>
</feature>
<feature type="transmembrane region" description="Helical" evidence="1">
    <location>
        <begin position="57"/>
        <end position="77"/>
    </location>
</feature>
<feature type="transmembrane region" description="Helical" evidence="1">
    <location>
        <begin position="85"/>
        <end position="105"/>
    </location>
</feature>
<feature type="domain" description="EamA" evidence="1">
    <location>
        <begin position="31"/>
        <end position="105"/>
    </location>
</feature>
<gene>
    <name evidence="1" type="primary">arnE</name>
    <name type="ordered locus">Ent638_2074</name>
</gene>
<name>ARNE_ENT38</name>